<dbReference type="EMBL" id="AE000520">
    <property type="protein sequence ID" value="AAC65848.1"/>
    <property type="molecule type" value="Genomic_DNA"/>
</dbReference>
<dbReference type="PIR" id="D71271">
    <property type="entry name" value="D71271"/>
</dbReference>
<dbReference type="RefSeq" id="WP_010882321.1">
    <property type="nucleotide sequence ID" value="NC_021490.2"/>
</dbReference>
<dbReference type="STRING" id="243276.TP_0878"/>
<dbReference type="EnsemblBacteria" id="AAC65848">
    <property type="protein sequence ID" value="AAC65848"/>
    <property type="gene ID" value="TP_0878"/>
</dbReference>
<dbReference type="KEGG" id="tpa:TP_0878"/>
<dbReference type="KEGG" id="tpw:TPANIC_0878"/>
<dbReference type="eggNOG" id="ENOG5031CDY">
    <property type="taxonomic scope" value="Bacteria"/>
</dbReference>
<dbReference type="HOGENOM" id="CLU_871360_0_0_12"/>
<dbReference type="Proteomes" id="UP000000811">
    <property type="component" value="Chromosome"/>
</dbReference>
<dbReference type="GO" id="GO:0016020">
    <property type="term" value="C:membrane"/>
    <property type="evidence" value="ECO:0007669"/>
    <property type="project" value="UniProtKB-SubCell"/>
</dbReference>
<dbReference type="InterPro" id="IPR025641">
    <property type="entry name" value="DUF4340"/>
</dbReference>
<dbReference type="Pfam" id="PF14238">
    <property type="entry name" value="DUF4340"/>
    <property type="match status" value="1"/>
</dbReference>
<evidence type="ECO:0000255" key="1"/>
<evidence type="ECO:0000305" key="2"/>
<proteinExistence type="predicted"/>
<accession>O83848</accession>
<comment type="subcellular location">
    <subcellularLocation>
        <location evidence="2">Membrane</location>
        <topology evidence="2">Single-pass membrane protein</topology>
    </subcellularLocation>
</comment>
<sequence length="316" mass="37313">MRSVDSRSSVTRWVCLTSVILFCFCIAVMRYGGVKKRRYFYGFCLHPRERADITEVILRFPREERNASRELRWVKKDRQWFIQLAHAIHPAKQEVLERLFQYLFTKRRFEFITNNTRFFSDYALGKQPAVQMKFTKKNGAAIGDIYFGALNGTGLGRYIRIGDNAAVFLTEDDFTPFFRDEKRFWCDTRQFHELFTQSQIQMMEVSGKYIVRSRTSVVFKEVEQFFARFSYVDVGPTPTQWKESIVIHRGDGKIIRFRLQPAAHQEWTLWDAQSVHAYTLSAYTARYLFALISRMQTETGMSSLQQFDTEENLISD</sequence>
<organism>
    <name type="scientific">Treponema pallidum (strain Nichols)</name>
    <dbReference type="NCBI Taxonomy" id="243276"/>
    <lineage>
        <taxon>Bacteria</taxon>
        <taxon>Pseudomonadati</taxon>
        <taxon>Spirochaetota</taxon>
        <taxon>Spirochaetia</taxon>
        <taxon>Spirochaetales</taxon>
        <taxon>Treponemataceae</taxon>
        <taxon>Treponema</taxon>
    </lineage>
</organism>
<protein>
    <recommendedName>
        <fullName>Uncharacterized protein TP_0878</fullName>
    </recommendedName>
</protein>
<reference key="1">
    <citation type="journal article" date="1998" name="Science">
        <title>Complete genome sequence of Treponema pallidum, the syphilis spirochete.</title>
        <authorList>
            <person name="Fraser C.M."/>
            <person name="Norris S.J."/>
            <person name="Weinstock G.M."/>
            <person name="White O."/>
            <person name="Sutton G.G."/>
            <person name="Dodson R.J."/>
            <person name="Gwinn M.L."/>
            <person name="Hickey E.K."/>
            <person name="Clayton R.A."/>
            <person name="Ketchum K.A."/>
            <person name="Sodergren E."/>
            <person name="Hardham J.M."/>
            <person name="McLeod M.P."/>
            <person name="Salzberg S.L."/>
            <person name="Peterson J.D."/>
            <person name="Khalak H.G."/>
            <person name="Richardson D.L."/>
            <person name="Howell J.K."/>
            <person name="Chidambaram M."/>
            <person name="Utterback T.R."/>
            <person name="McDonald L.A."/>
            <person name="Artiach P."/>
            <person name="Bowman C."/>
            <person name="Cotton M.D."/>
            <person name="Fujii C."/>
            <person name="Garland S.A."/>
            <person name="Hatch B."/>
            <person name="Horst K."/>
            <person name="Roberts K.M."/>
            <person name="Sandusky M."/>
            <person name="Weidman J.F."/>
            <person name="Smith H.O."/>
            <person name="Venter J.C."/>
        </authorList>
    </citation>
    <scope>NUCLEOTIDE SEQUENCE [LARGE SCALE GENOMIC DNA]</scope>
    <source>
        <strain>Nichols</strain>
    </source>
</reference>
<keyword id="KW-0472">Membrane</keyword>
<keyword id="KW-1185">Reference proteome</keyword>
<keyword id="KW-0812">Transmembrane</keyword>
<keyword id="KW-1133">Transmembrane helix</keyword>
<gene>
    <name type="ordered locus">TP_0878</name>
</gene>
<feature type="chain" id="PRO_0000202345" description="Uncharacterized protein TP_0878">
    <location>
        <begin position="1"/>
        <end position="316"/>
    </location>
</feature>
<feature type="transmembrane region" description="Helical" evidence="1">
    <location>
        <begin position="12"/>
        <end position="34"/>
    </location>
</feature>
<name>Y878_TREPA</name>